<sequence length="642" mass="73480">MPIITLPDGSKREFVNPVSTLDVAADIGPGLAKACIAGRVNGELKDACDLISTDSDLSIITAKDQEGVEILRHSCAHLLGHAVKQMWPEAKMAIGPVIDNGFYYDIDLDHKLTAEDIEALEKRMMDLAKTNYDVVKRVVSWHEARDAFSERGEVYKIAILDENISKDATPALYHHEEYTDMCRGPHVPNMRFCQNFKLMSVAGAYWRGNSDNKMLQRVYGTAWADKKALKTHLTRLEEAAKRDHRKIGKQLDLYHMQEEAPGMVFWHNDGWSLFLELEKFIRQKLGQYTYQEVKGPLMMDRALWERSGHWDKYSDAMFTTNSENREYAIKPMNCPGHVQIFNQGLKSYRDLPLRMAEFGCCHRNEPSGSLHGLMRVRGFTQDDAHIFCTDDQVQKEVSDCIQMVYDTYATFGFENIVVKLSTRPEKRIGDDDMWDRAEEALKQALIANEIEFEILPGEGAFYGPKIEFTLHDCLDRAWQCGTVQLDYALPSRLGATYVAEDNTRQTPVMIHRAILGSLERFLGILIEEYAGKFPTWLAPMQVVVMNITDKQADYVQDVVKIFKEQGIRASFDLRNEKIGFKIREHTLRRVPYLLVVGDQEMENKEVAVRTRDGIDLGKMSIEDFAKKIHKDISSRSLKLLEE</sequence>
<keyword id="KW-0030">Aminoacyl-tRNA synthetase</keyword>
<keyword id="KW-0067">ATP-binding</keyword>
<keyword id="KW-0963">Cytoplasm</keyword>
<keyword id="KW-0436">Ligase</keyword>
<keyword id="KW-0479">Metal-binding</keyword>
<keyword id="KW-0547">Nucleotide-binding</keyword>
<keyword id="KW-0648">Protein biosynthesis</keyword>
<keyword id="KW-1185">Reference proteome</keyword>
<keyword id="KW-0694">RNA-binding</keyword>
<keyword id="KW-0820">tRNA-binding</keyword>
<keyword id="KW-0862">Zinc</keyword>
<gene>
    <name evidence="1" type="primary">thrS</name>
    <name type="ordered locus">Sden_1705</name>
</gene>
<accession>Q12NI7</accession>
<dbReference type="EC" id="6.1.1.3" evidence="1"/>
<dbReference type="EMBL" id="CP000302">
    <property type="protein sequence ID" value="ABE54989.1"/>
    <property type="molecule type" value="Genomic_DNA"/>
</dbReference>
<dbReference type="RefSeq" id="WP_011496147.1">
    <property type="nucleotide sequence ID" value="NC_007954.1"/>
</dbReference>
<dbReference type="SMR" id="Q12NI7"/>
<dbReference type="STRING" id="318161.Sden_1705"/>
<dbReference type="KEGG" id="sdn:Sden_1705"/>
<dbReference type="eggNOG" id="COG0441">
    <property type="taxonomic scope" value="Bacteria"/>
</dbReference>
<dbReference type="HOGENOM" id="CLU_008554_0_1_6"/>
<dbReference type="OrthoDB" id="9802304at2"/>
<dbReference type="Proteomes" id="UP000001982">
    <property type="component" value="Chromosome"/>
</dbReference>
<dbReference type="GO" id="GO:0005829">
    <property type="term" value="C:cytosol"/>
    <property type="evidence" value="ECO:0007669"/>
    <property type="project" value="TreeGrafter"/>
</dbReference>
<dbReference type="GO" id="GO:0005524">
    <property type="term" value="F:ATP binding"/>
    <property type="evidence" value="ECO:0007669"/>
    <property type="project" value="UniProtKB-UniRule"/>
</dbReference>
<dbReference type="GO" id="GO:0046872">
    <property type="term" value="F:metal ion binding"/>
    <property type="evidence" value="ECO:0007669"/>
    <property type="project" value="UniProtKB-KW"/>
</dbReference>
<dbReference type="GO" id="GO:0004829">
    <property type="term" value="F:threonine-tRNA ligase activity"/>
    <property type="evidence" value="ECO:0007669"/>
    <property type="project" value="UniProtKB-UniRule"/>
</dbReference>
<dbReference type="GO" id="GO:0000049">
    <property type="term" value="F:tRNA binding"/>
    <property type="evidence" value="ECO:0007669"/>
    <property type="project" value="UniProtKB-KW"/>
</dbReference>
<dbReference type="GO" id="GO:0006435">
    <property type="term" value="P:threonyl-tRNA aminoacylation"/>
    <property type="evidence" value="ECO:0007669"/>
    <property type="project" value="UniProtKB-UniRule"/>
</dbReference>
<dbReference type="CDD" id="cd01667">
    <property type="entry name" value="TGS_ThrRS"/>
    <property type="match status" value="1"/>
</dbReference>
<dbReference type="CDD" id="cd00860">
    <property type="entry name" value="ThrRS_anticodon"/>
    <property type="match status" value="1"/>
</dbReference>
<dbReference type="CDD" id="cd00771">
    <property type="entry name" value="ThrRS_core"/>
    <property type="match status" value="1"/>
</dbReference>
<dbReference type="FunFam" id="3.10.20.30:FF:000005">
    <property type="entry name" value="Threonine--tRNA ligase"/>
    <property type="match status" value="1"/>
</dbReference>
<dbReference type="FunFam" id="3.30.54.20:FF:000002">
    <property type="entry name" value="Threonine--tRNA ligase"/>
    <property type="match status" value="1"/>
</dbReference>
<dbReference type="FunFam" id="3.30.930.10:FF:000002">
    <property type="entry name" value="Threonine--tRNA ligase"/>
    <property type="match status" value="1"/>
</dbReference>
<dbReference type="FunFam" id="3.40.50.800:FF:000001">
    <property type="entry name" value="Threonine--tRNA ligase"/>
    <property type="match status" value="1"/>
</dbReference>
<dbReference type="FunFam" id="3.30.980.10:FF:000005">
    <property type="entry name" value="Threonyl-tRNA synthetase, mitochondrial"/>
    <property type="match status" value="1"/>
</dbReference>
<dbReference type="Gene3D" id="3.10.20.30">
    <property type="match status" value="1"/>
</dbReference>
<dbReference type="Gene3D" id="3.30.54.20">
    <property type="match status" value="1"/>
</dbReference>
<dbReference type="Gene3D" id="3.40.50.800">
    <property type="entry name" value="Anticodon-binding domain"/>
    <property type="match status" value="1"/>
</dbReference>
<dbReference type="Gene3D" id="3.30.930.10">
    <property type="entry name" value="Bira Bifunctional Protein, Domain 2"/>
    <property type="match status" value="1"/>
</dbReference>
<dbReference type="Gene3D" id="3.30.980.10">
    <property type="entry name" value="Threonyl-trna Synthetase, Chain A, domain 2"/>
    <property type="match status" value="1"/>
</dbReference>
<dbReference type="HAMAP" id="MF_00184">
    <property type="entry name" value="Thr_tRNA_synth"/>
    <property type="match status" value="1"/>
</dbReference>
<dbReference type="InterPro" id="IPR002314">
    <property type="entry name" value="aa-tRNA-synt_IIb"/>
</dbReference>
<dbReference type="InterPro" id="IPR006195">
    <property type="entry name" value="aa-tRNA-synth_II"/>
</dbReference>
<dbReference type="InterPro" id="IPR045864">
    <property type="entry name" value="aa-tRNA-synth_II/BPL/LPL"/>
</dbReference>
<dbReference type="InterPro" id="IPR004154">
    <property type="entry name" value="Anticodon-bd"/>
</dbReference>
<dbReference type="InterPro" id="IPR036621">
    <property type="entry name" value="Anticodon-bd_dom_sf"/>
</dbReference>
<dbReference type="InterPro" id="IPR012675">
    <property type="entry name" value="Beta-grasp_dom_sf"/>
</dbReference>
<dbReference type="InterPro" id="IPR004095">
    <property type="entry name" value="TGS"/>
</dbReference>
<dbReference type="InterPro" id="IPR012676">
    <property type="entry name" value="TGS-like"/>
</dbReference>
<dbReference type="InterPro" id="IPR002320">
    <property type="entry name" value="Thr-tRNA-ligase_IIa"/>
</dbReference>
<dbReference type="InterPro" id="IPR018163">
    <property type="entry name" value="Thr/Ala-tRNA-synth_IIc_edit"/>
</dbReference>
<dbReference type="InterPro" id="IPR047246">
    <property type="entry name" value="ThrRS_anticodon"/>
</dbReference>
<dbReference type="InterPro" id="IPR033728">
    <property type="entry name" value="ThrRS_core"/>
</dbReference>
<dbReference type="InterPro" id="IPR012947">
    <property type="entry name" value="tRNA_SAD"/>
</dbReference>
<dbReference type="NCBIfam" id="TIGR00418">
    <property type="entry name" value="thrS"/>
    <property type="match status" value="1"/>
</dbReference>
<dbReference type="PANTHER" id="PTHR11451:SF44">
    <property type="entry name" value="THREONINE--TRNA LIGASE, CHLOROPLASTIC_MITOCHONDRIAL 2"/>
    <property type="match status" value="1"/>
</dbReference>
<dbReference type="PANTHER" id="PTHR11451">
    <property type="entry name" value="THREONINE-TRNA LIGASE"/>
    <property type="match status" value="1"/>
</dbReference>
<dbReference type="Pfam" id="PF03129">
    <property type="entry name" value="HGTP_anticodon"/>
    <property type="match status" value="1"/>
</dbReference>
<dbReference type="Pfam" id="PF02824">
    <property type="entry name" value="TGS"/>
    <property type="match status" value="1"/>
</dbReference>
<dbReference type="Pfam" id="PF00587">
    <property type="entry name" value="tRNA-synt_2b"/>
    <property type="match status" value="1"/>
</dbReference>
<dbReference type="Pfam" id="PF07973">
    <property type="entry name" value="tRNA_SAD"/>
    <property type="match status" value="1"/>
</dbReference>
<dbReference type="PRINTS" id="PR01047">
    <property type="entry name" value="TRNASYNTHTHR"/>
</dbReference>
<dbReference type="SMART" id="SM00863">
    <property type="entry name" value="tRNA_SAD"/>
    <property type="match status" value="1"/>
</dbReference>
<dbReference type="SUPFAM" id="SSF52954">
    <property type="entry name" value="Class II aaRS ABD-related"/>
    <property type="match status" value="1"/>
</dbReference>
<dbReference type="SUPFAM" id="SSF55681">
    <property type="entry name" value="Class II aaRS and biotin synthetases"/>
    <property type="match status" value="1"/>
</dbReference>
<dbReference type="SUPFAM" id="SSF81271">
    <property type="entry name" value="TGS-like"/>
    <property type="match status" value="1"/>
</dbReference>
<dbReference type="SUPFAM" id="SSF55186">
    <property type="entry name" value="ThrRS/AlaRS common domain"/>
    <property type="match status" value="1"/>
</dbReference>
<dbReference type="PROSITE" id="PS50862">
    <property type="entry name" value="AA_TRNA_LIGASE_II"/>
    <property type="match status" value="1"/>
</dbReference>
<dbReference type="PROSITE" id="PS51880">
    <property type="entry name" value="TGS"/>
    <property type="match status" value="1"/>
</dbReference>
<evidence type="ECO:0000255" key="1">
    <source>
        <dbReference type="HAMAP-Rule" id="MF_00184"/>
    </source>
</evidence>
<evidence type="ECO:0000255" key="2">
    <source>
        <dbReference type="PROSITE-ProRule" id="PRU01228"/>
    </source>
</evidence>
<reference key="1">
    <citation type="submission" date="2006-03" db="EMBL/GenBank/DDBJ databases">
        <title>Complete sequence of Shewanella denitrificans OS217.</title>
        <authorList>
            <consortium name="US DOE Joint Genome Institute"/>
            <person name="Copeland A."/>
            <person name="Lucas S."/>
            <person name="Lapidus A."/>
            <person name="Barry K."/>
            <person name="Detter J.C."/>
            <person name="Glavina del Rio T."/>
            <person name="Hammon N."/>
            <person name="Israni S."/>
            <person name="Dalin E."/>
            <person name="Tice H."/>
            <person name="Pitluck S."/>
            <person name="Brettin T."/>
            <person name="Bruce D."/>
            <person name="Han C."/>
            <person name="Tapia R."/>
            <person name="Gilna P."/>
            <person name="Kiss H."/>
            <person name="Schmutz J."/>
            <person name="Larimer F."/>
            <person name="Land M."/>
            <person name="Hauser L."/>
            <person name="Kyrpides N."/>
            <person name="Lykidis A."/>
            <person name="Richardson P."/>
        </authorList>
    </citation>
    <scope>NUCLEOTIDE SEQUENCE [LARGE SCALE GENOMIC DNA]</scope>
    <source>
        <strain>OS217 / ATCC BAA-1090 / DSM 15013</strain>
    </source>
</reference>
<proteinExistence type="inferred from homology"/>
<feature type="chain" id="PRO_1000020503" description="Threonine--tRNA ligase">
    <location>
        <begin position="1"/>
        <end position="642"/>
    </location>
</feature>
<feature type="domain" description="TGS" evidence="2">
    <location>
        <begin position="1"/>
        <end position="61"/>
    </location>
</feature>
<feature type="region of interest" description="Catalytic" evidence="1">
    <location>
        <begin position="243"/>
        <end position="534"/>
    </location>
</feature>
<feature type="binding site" evidence="1">
    <location>
        <position position="334"/>
    </location>
    <ligand>
        <name>Zn(2+)</name>
        <dbReference type="ChEBI" id="CHEBI:29105"/>
    </ligand>
</feature>
<feature type="binding site" evidence="1">
    <location>
        <position position="385"/>
    </location>
    <ligand>
        <name>Zn(2+)</name>
        <dbReference type="ChEBI" id="CHEBI:29105"/>
    </ligand>
</feature>
<feature type="binding site" evidence="1">
    <location>
        <position position="511"/>
    </location>
    <ligand>
        <name>Zn(2+)</name>
        <dbReference type="ChEBI" id="CHEBI:29105"/>
    </ligand>
</feature>
<name>SYT_SHEDO</name>
<comment type="function">
    <text evidence="1">Catalyzes the attachment of threonine to tRNA(Thr) in a two-step reaction: L-threonine is first activated by ATP to form Thr-AMP and then transferred to the acceptor end of tRNA(Thr). Also edits incorrectly charged L-seryl-tRNA(Thr).</text>
</comment>
<comment type="catalytic activity">
    <reaction evidence="1">
        <text>tRNA(Thr) + L-threonine + ATP = L-threonyl-tRNA(Thr) + AMP + diphosphate + H(+)</text>
        <dbReference type="Rhea" id="RHEA:24624"/>
        <dbReference type="Rhea" id="RHEA-COMP:9670"/>
        <dbReference type="Rhea" id="RHEA-COMP:9704"/>
        <dbReference type="ChEBI" id="CHEBI:15378"/>
        <dbReference type="ChEBI" id="CHEBI:30616"/>
        <dbReference type="ChEBI" id="CHEBI:33019"/>
        <dbReference type="ChEBI" id="CHEBI:57926"/>
        <dbReference type="ChEBI" id="CHEBI:78442"/>
        <dbReference type="ChEBI" id="CHEBI:78534"/>
        <dbReference type="ChEBI" id="CHEBI:456215"/>
        <dbReference type="EC" id="6.1.1.3"/>
    </reaction>
</comment>
<comment type="cofactor">
    <cofactor evidence="1">
        <name>Zn(2+)</name>
        <dbReference type="ChEBI" id="CHEBI:29105"/>
    </cofactor>
    <text evidence="1">Binds 1 zinc ion per subunit.</text>
</comment>
<comment type="subunit">
    <text evidence="1">Homodimer.</text>
</comment>
<comment type="subcellular location">
    <subcellularLocation>
        <location evidence="1">Cytoplasm</location>
    </subcellularLocation>
</comment>
<comment type="similarity">
    <text evidence="1">Belongs to the class-II aminoacyl-tRNA synthetase family.</text>
</comment>
<organism>
    <name type="scientific">Shewanella denitrificans (strain OS217 / ATCC BAA-1090 / DSM 15013)</name>
    <dbReference type="NCBI Taxonomy" id="318161"/>
    <lineage>
        <taxon>Bacteria</taxon>
        <taxon>Pseudomonadati</taxon>
        <taxon>Pseudomonadota</taxon>
        <taxon>Gammaproteobacteria</taxon>
        <taxon>Alteromonadales</taxon>
        <taxon>Shewanellaceae</taxon>
        <taxon>Shewanella</taxon>
    </lineage>
</organism>
<protein>
    <recommendedName>
        <fullName evidence="1">Threonine--tRNA ligase</fullName>
        <ecNumber evidence="1">6.1.1.3</ecNumber>
    </recommendedName>
    <alternativeName>
        <fullName evidence="1">Threonyl-tRNA synthetase</fullName>
        <shortName evidence="1">ThrRS</shortName>
    </alternativeName>
</protein>